<organism>
    <name type="scientific">Methanothrix thermoacetophila (strain DSM 6194 / JCM 14653 / NBRC 101360 / PT)</name>
    <name type="common">Methanosaeta thermophila</name>
    <dbReference type="NCBI Taxonomy" id="349307"/>
    <lineage>
        <taxon>Archaea</taxon>
        <taxon>Methanobacteriati</taxon>
        <taxon>Methanobacteriota</taxon>
        <taxon>Stenosarchaea group</taxon>
        <taxon>Methanomicrobia</taxon>
        <taxon>Methanotrichales</taxon>
        <taxon>Methanotrichaceae</taxon>
        <taxon>Methanothrix</taxon>
    </lineage>
</organism>
<proteinExistence type="inferred from homology"/>
<protein>
    <recommendedName>
        <fullName evidence="1">O-phosphoserine--tRNA(Cys) ligase</fullName>
        <shortName evidence="1">O-phosphoserine--tRNA ligase</shortName>
        <ecNumber evidence="1">6.1.1.27</ecNumber>
    </recommendedName>
    <alternativeName>
        <fullName evidence="1">Non-canonical O-phosphoseryl-tRNA(Cys) synthetase</fullName>
    </alternativeName>
    <alternativeName>
        <fullName evidence="1">O-phosphoseryl-tRNA(Cys) synthetase</fullName>
        <shortName evidence="1">SepRS</shortName>
    </alternativeName>
</protein>
<sequence>MKFDPAEIREAAEKDFDGTWKRGVDYLERPSLERIYPRRSYPHGRPHPVFETIQRLREAYLRMGFTEMMNPVIVDAQEVHRQFGSEALAVLDRCFYLAGLPRPDIGISESRLSEISSIVGKELTAEEIEALREILHSYKKGAVEGDDLVPEISKAINASDSQVSMMLESVFPEFRELRPEPTSRTLRSHMTSGWFISLSNLWYRMPLPVRLFSVDRCFRREQSEDAARLMSYHSASCVVMDEDMSVDEGKAISEGLLSQFGFENFRFRPDEKRSKYYIPGTQIEVYAYHPGLVGSETKYGSGWVEIATFGVYSPTALAQYDIPYPVLNLGLGVERLAMILYGSKDLRALSYPQLQPDWSLKPIEIARMIHVDKSPMTVTGKEIARSVVETCVKYGNTPSPCEFDAWEGELFGRRIKVSVVEPEENTKLCGPAYLNEIVVYRNEILGIPRTPKWEAAFEEGVQTGIRFIDAFAELAAHEIEMATIEGRGSETRVRIVRTAGEINVRIDPALERYITSYKKRIDIRGPVFTTVRSELMQGDKHGEKT</sequence>
<evidence type="ECO:0000255" key="1">
    <source>
        <dbReference type="HAMAP-Rule" id="MF_01674"/>
    </source>
</evidence>
<name>SEPS_METTP</name>
<keyword id="KW-0030">Aminoacyl-tRNA synthetase</keyword>
<keyword id="KW-0067">ATP-binding</keyword>
<keyword id="KW-0436">Ligase</keyword>
<keyword id="KW-0547">Nucleotide-binding</keyword>
<keyword id="KW-0648">Protein biosynthesis</keyword>
<keyword id="KW-1185">Reference proteome</keyword>
<feature type="chain" id="PRO_0000363759" description="O-phosphoserine--tRNA(Cys) ligase">
    <location>
        <begin position="1"/>
        <end position="545"/>
    </location>
</feature>
<feature type="binding site" evidence="1">
    <location>
        <begin position="189"/>
        <end position="191"/>
    </location>
    <ligand>
        <name>substrate</name>
    </ligand>
</feature>
<feature type="binding site" evidence="1">
    <location>
        <begin position="234"/>
        <end position="236"/>
    </location>
    <ligand>
        <name>substrate</name>
    </ligand>
</feature>
<feature type="binding site" evidence="1">
    <location>
        <begin position="276"/>
        <end position="277"/>
    </location>
    <ligand>
        <name>substrate</name>
    </ligand>
</feature>
<feature type="binding site" evidence="1">
    <location>
        <position position="328"/>
    </location>
    <ligand>
        <name>substrate</name>
    </ligand>
</feature>
<gene>
    <name evidence="1" type="primary">sepS</name>
    <name type="ordered locus">Mthe_0363</name>
</gene>
<dbReference type="EC" id="6.1.1.27" evidence="1"/>
<dbReference type="EMBL" id="CP000477">
    <property type="protein sequence ID" value="ABK14156.1"/>
    <property type="molecule type" value="Genomic_DNA"/>
</dbReference>
<dbReference type="RefSeq" id="WP_011695554.1">
    <property type="nucleotide sequence ID" value="NC_008553.1"/>
</dbReference>
<dbReference type="SMR" id="A0B632"/>
<dbReference type="STRING" id="349307.Mthe_0363"/>
<dbReference type="GeneID" id="4462697"/>
<dbReference type="KEGG" id="mtp:Mthe_0363"/>
<dbReference type="HOGENOM" id="CLU_506822_0_0_2"/>
<dbReference type="OrthoDB" id="145125at2157"/>
<dbReference type="Proteomes" id="UP000000674">
    <property type="component" value="Chromosome"/>
</dbReference>
<dbReference type="GO" id="GO:0005524">
    <property type="term" value="F:ATP binding"/>
    <property type="evidence" value="ECO:0007669"/>
    <property type="project" value="UniProtKB-UniRule"/>
</dbReference>
<dbReference type="GO" id="GO:0043816">
    <property type="term" value="F:phosphoserine-tRNA(Cys) ligase activity"/>
    <property type="evidence" value="ECO:0007669"/>
    <property type="project" value="UniProtKB-EC"/>
</dbReference>
<dbReference type="GO" id="GO:0000049">
    <property type="term" value="F:tRNA binding"/>
    <property type="evidence" value="ECO:0007669"/>
    <property type="project" value="InterPro"/>
</dbReference>
<dbReference type="GO" id="GO:0006412">
    <property type="term" value="P:translation"/>
    <property type="evidence" value="ECO:0007669"/>
    <property type="project" value="UniProtKB-KW"/>
</dbReference>
<dbReference type="GO" id="GO:0043039">
    <property type="term" value="P:tRNA aminoacylation"/>
    <property type="evidence" value="ECO:0007669"/>
    <property type="project" value="UniProtKB-UniRule"/>
</dbReference>
<dbReference type="Gene3D" id="6.20.250.20">
    <property type="match status" value="1"/>
</dbReference>
<dbReference type="Gene3D" id="3.30.930.10">
    <property type="entry name" value="Bira Bifunctional Protein, Domain 2"/>
    <property type="match status" value="1"/>
</dbReference>
<dbReference type="HAMAP" id="MF_01674">
    <property type="entry name" value="Sep_tRNA_synth"/>
    <property type="match status" value="1"/>
</dbReference>
<dbReference type="InterPro" id="IPR006195">
    <property type="entry name" value="aa-tRNA-synth_II"/>
</dbReference>
<dbReference type="InterPro" id="IPR045864">
    <property type="entry name" value="aa-tRNA-synth_II/BPL/LPL"/>
</dbReference>
<dbReference type="InterPro" id="IPR005246">
    <property type="entry name" value="O-Pseryl-tRNA(Cys)_ligase"/>
</dbReference>
<dbReference type="InterPro" id="IPR002319">
    <property type="entry name" value="Phenylalanyl-tRNA_Synthase"/>
</dbReference>
<dbReference type="InterPro" id="IPR041590">
    <property type="entry name" value="SepRS_C"/>
</dbReference>
<dbReference type="NCBIfam" id="TIGR00470">
    <property type="entry name" value="sepS"/>
    <property type="match status" value="1"/>
</dbReference>
<dbReference type="Pfam" id="PF18006">
    <property type="entry name" value="SepRS_C"/>
    <property type="match status" value="1"/>
</dbReference>
<dbReference type="Pfam" id="PF01409">
    <property type="entry name" value="tRNA-synt_2d"/>
    <property type="match status" value="1"/>
</dbReference>
<dbReference type="SUPFAM" id="SSF55681">
    <property type="entry name" value="Class II aaRS and biotin synthetases"/>
    <property type="match status" value="1"/>
</dbReference>
<dbReference type="PROSITE" id="PS50862">
    <property type="entry name" value="AA_TRNA_LIGASE_II"/>
    <property type="match status" value="1"/>
</dbReference>
<reference key="1">
    <citation type="submission" date="2006-10" db="EMBL/GenBank/DDBJ databases">
        <title>Complete sequence of Methanosaeta thermophila PT.</title>
        <authorList>
            <consortium name="US DOE Joint Genome Institute"/>
            <person name="Copeland A."/>
            <person name="Lucas S."/>
            <person name="Lapidus A."/>
            <person name="Barry K."/>
            <person name="Detter J.C."/>
            <person name="Glavina del Rio T."/>
            <person name="Hammon N."/>
            <person name="Israni S."/>
            <person name="Pitluck S."/>
            <person name="Chain P."/>
            <person name="Malfatti S."/>
            <person name="Shin M."/>
            <person name="Vergez L."/>
            <person name="Schmutz J."/>
            <person name="Larimer F."/>
            <person name="Land M."/>
            <person name="Hauser L."/>
            <person name="Kyrpides N."/>
            <person name="Kim E."/>
            <person name="Smith K.S."/>
            <person name="Ingram-Smith C."/>
            <person name="Richardson P."/>
        </authorList>
    </citation>
    <scope>NUCLEOTIDE SEQUENCE [LARGE SCALE GENOMIC DNA]</scope>
    <source>
        <strain>DSM 6194 / JCM 14653 / NBRC 101360 / PT</strain>
    </source>
</reference>
<accession>A0B632</accession>
<comment type="function">
    <text evidence="1">Catalyzes the attachment of O-phosphoserine (Sep) to tRNA(Cys).</text>
</comment>
<comment type="catalytic activity">
    <reaction evidence="1">
        <text>tRNA(Cys) + O-phospho-L-serine + ATP = O-phospho-L-seryl-tRNA(Cys) + AMP + diphosphate</text>
        <dbReference type="Rhea" id="RHEA:25678"/>
        <dbReference type="Rhea" id="RHEA-COMP:9661"/>
        <dbReference type="Rhea" id="RHEA-COMP:9719"/>
        <dbReference type="ChEBI" id="CHEBI:30616"/>
        <dbReference type="ChEBI" id="CHEBI:33019"/>
        <dbReference type="ChEBI" id="CHEBI:57524"/>
        <dbReference type="ChEBI" id="CHEBI:78442"/>
        <dbReference type="ChEBI" id="CHEBI:78551"/>
        <dbReference type="ChEBI" id="CHEBI:456215"/>
        <dbReference type="EC" id="6.1.1.27"/>
    </reaction>
</comment>
<comment type="subunit">
    <text evidence="1">Homotetramer. Interacts with SepCysS.</text>
</comment>
<comment type="similarity">
    <text evidence="1">Belongs to the class-II aminoacyl-tRNA synthetase family. O-phosphoseryl-tRNA(Cys) synthetase subfamily.</text>
</comment>